<reference key="1">
    <citation type="journal article" date="1998" name="Hear. Res.">
        <title>Novel variant of the P2X2 ATP receptor from the guinea pig organ of Corti.</title>
        <authorList>
            <person name="Parker M.S."/>
            <person name="Larroque M.L."/>
            <person name="Campbell J.M."/>
            <person name="Bobbin R.P."/>
            <person name="Deininger P.L."/>
        </authorList>
    </citation>
    <scope>NUCLEOTIDE SEQUENCE [MRNA] (ISOFORMS P2X2-1; P2X2-2 AND P2X2-3)</scope>
    <scope>TISSUE SPECIFICITY</scope>
    <source>
        <strain>NIH 2</strain>
        <tissue>Organ of Corti</tissue>
    </source>
</reference>
<evidence type="ECO:0000250" key="1">
    <source>
        <dbReference type="UniProtKB" id="P49653"/>
    </source>
</evidence>
<evidence type="ECO:0000250" key="2">
    <source>
        <dbReference type="UniProtKB" id="P56373"/>
    </source>
</evidence>
<evidence type="ECO:0000250" key="3">
    <source>
        <dbReference type="UniProtKB" id="Q8K3P1"/>
    </source>
</evidence>
<evidence type="ECO:0000250" key="4">
    <source>
        <dbReference type="UniProtKB" id="Q9UBL9"/>
    </source>
</evidence>
<evidence type="ECO:0000255" key="5"/>
<evidence type="ECO:0000256" key="6">
    <source>
        <dbReference type="SAM" id="MobiDB-lite"/>
    </source>
</evidence>
<evidence type="ECO:0000269" key="7">
    <source>
    </source>
</evidence>
<evidence type="ECO:0000303" key="8">
    <source>
    </source>
</evidence>
<evidence type="ECO:0000305" key="9"/>
<gene>
    <name type="primary">P2RX2</name>
</gene>
<accession>O70397</accession>
<accession>O70398</accession>
<accession>O70399</accession>
<proteinExistence type="evidence at transcript level"/>
<name>P2RX2_CAVPO</name>
<organism>
    <name type="scientific">Cavia porcellus</name>
    <name type="common">Guinea pig</name>
    <dbReference type="NCBI Taxonomy" id="10141"/>
    <lineage>
        <taxon>Eukaryota</taxon>
        <taxon>Metazoa</taxon>
        <taxon>Chordata</taxon>
        <taxon>Craniata</taxon>
        <taxon>Vertebrata</taxon>
        <taxon>Euteleostomi</taxon>
        <taxon>Mammalia</taxon>
        <taxon>Eutheria</taxon>
        <taxon>Euarchontoglires</taxon>
        <taxon>Glires</taxon>
        <taxon>Rodentia</taxon>
        <taxon>Hystricomorpha</taxon>
        <taxon>Caviidae</taxon>
        <taxon>Cavia</taxon>
    </lineage>
</organism>
<sequence length="474" mass="52702">MAATHPKAPTAQRLRQGWSAFWDYETPKVIVVRNRPLGVVYRAVQLLILLYFVWYVFIVQKSYQDSETGPESSIITKVKGITQSEHKVWDVEEYVKPPEGGSVFSIITRIEVTPFQTLGACPESIRVPNTTCHLDADCTAGELDMLGNGLRTGRCVPYYHGEAKTCEVSGWCPVEDGAAVSHFLGKMAPNFTILIKNSIHYPKFQFSKGNIAHRDMTYLRRCTFDQGFDPYCPIFRLGFIVEQAGENFTELAHRGGVIGVIINWDCDLDLPSSHCNPKYSFRRLDPKHVPASSGYNFRFAKYYRVNSTTTRTLIKAYGIRIDVIVHGQAGKFSLIPTIINLATALTSIGVGSFLCDWILLTFMNKNKVYSHKKFDKVCAPSRPSSSWPVTLALILGQAPPPPRHCSSPWHLAHQAVGPQGAEQAKLLGLQNPTPYRLSEQIADTPDRCVGQGLPSSESPLQDSTPTDPKGLAQL</sequence>
<dbReference type="EMBL" id="AF053327">
    <property type="protein sequence ID" value="AAC08992.1"/>
    <property type="molecule type" value="mRNA"/>
</dbReference>
<dbReference type="EMBL" id="AF053328">
    <property type="protein sequence ID" value="AAC08993.1"/>
    <property type="molecule type" value="mRNA"/>
</dbReference>
<dbReference type="EMBL" id="AF053329">
    <property type="protein sequence ID" value="AAC08994.1"/>
    <property type="molecule type" value="mRNA"/>
</dbReference>
<dbReference type="RefSeq" id="NP_001166180.1">
    <molecule id="O70397-1"/>
    <property type="nucleotide sequence ID" value="NM_001172709.1"/>
</dbReference>
<dbReference type="SMR" id="O70397"/>
<dbReference type="FunCoup" id="O70397">
    <property type="interactions" value="544"/>
</dbReference>
<dbReference type="STRING" id="10141.ENSCPOP00000012287"/>
<dbReference type="GlyCosmos" id="O70397">
    <property type="glycosylation" value="4 sites, No reported glycans"/>
</dbReference>
<dbReference type="GeneID" id="100135591"/>
<dbReference type="KEGG" id="cpoc:100135591"/>
<dbReference type="CTD" id="22953"/>
<dbReference type="eggNOG" id="ENOG502QVP9">
    <property type="taxonomic scope" value="Eukaryota"/>
</dbReference>
<dbReference type="InParanoid" id="O70397"/>
<dbReference type="OrthoDB" id="494673at2759"/>
<dbReference type="Proteomes" id="UP000005447">
    <property type="component" value="Unassembled WGS sequence"/>
</dbReference>
<dbReference type="GO" id="GO:0016324">
    <property type="term" value="C:apical plasma membrane"/>
    <property type="evidence" value="ECO:0000250"/>
    <property type="project" value="UniProtKB"/>
</dbReference>
<dbReference type="GO" id="GO:0005886">
    <property type="term" value="C:plasma membrane"/>
    <property type="evidence" value="ECO:0000250"/>
    <property type="project" value="UniProtKB"/>
</dbReference>
<dbReference type="GO" id="GO:0098794">
    <property type="term" value="C:postsynapse"/>
    <property type="evidence" value="ECO:0007669"/>
    <property type="project" value="GOC"/>
</dbReference>
<dbReference type="GO" id="GO:0043235">
    <property type="term" value="C:receptor complex"/>
    <property type="evidence" value="ECO:0007669"/>
    <property type="project" value="TreeGrafter"/>
</dbReference>
<dbReference type="GO" id="GO:0005524">
    <property type="term" value="F:ATP binding"/>
    <property type="evidence" value="ECO:0007669"/>
    <property type="project" value="UniProtKB-KW"/>
</dbReference>
<dbReference type="GO" id="GO:0001228">
    <property type="term" value="F:DNA-binding transcription activator activity, RNA polymerase II-specific"/>
    <property type="evidence" value="ECO:0000250"/>
    <property type="project" value="UniProtKB"/>
</dbReference>
<dbReference type="GO" id="GO:0004931">
    <property type="term" value="F:extracellularly ATP-gated monoatomic cation channel activity"/>
    <property type="evidence" value="ECO:0000250"/>
    <property type="project" value="UniProtKB"/>
</dbReference>
<dbReference type="GO" id="GO:0001614">
    <property type="term" value="F:purinergic nucleotide receptor activity"/>
    <property type="evidence" value="ECO:0007669"/>
    <property type="project" value="InterPro"/>
</dbReference>
<dbReference type="GO" id="GO:0070588">
    <property type="term" value="P:calcium ion transmembrane transport"/>
    <property type="evidence" value="ECO:0007669"/>
    <property type="project" value="TreeGrafter"/>
</dbReference>
<dbReference type="GO" id="GO:0033198">
    <property type="term" value="P:response to ATP"/>
    <property type="evidence" value="ECO:0007669"/>
    <property type="project" value="InterPro"/>
</dbReference>
<dbReference type="GO" id="GO:0007605">
    <property type="term" value="P:sensory perception of sound"/>
    <property type="evidence" value="ECO:0000250"/>
    <property type="project" value="UniProtKB"/>
</dbReference>
<dbReference type="FunFam" id="1.10.287.940:FF:000008">
    <property type="entry name" value="P2X purinoceptor"/>
    <property type="match status" value="1"/>
</dbReference>
<dbReference type="FunFam" id="2.60.490.10:FF:000001">
    <property type="entry name" value="P2X purinoceptor"/>
    <property type="match status" value="1"/>
</dbReference>
<dbReference type="Gene3D" id="1.10.287.940">
    <property type="entry name" value="atp-gated p2x4 ion channel"/>
    <property type="match status" value="1"/>
</dbReference>
<dbReference type="Gene3D" id="2.60.490.10">
    <property type="entry name" value="atp-gated p2x4 ion channel domain"/>
    <property type="match status" value="1"/>
</dbReference>
<dbReference type="InterPro" id="IPR003045">
    <property type="entry name" value="P2X2_purnocptor"/>
</dbReference>
<dbReference type="InterPro" id="IPR027309">
    <property type="entry name" value="P2X_extracellular_dom_sf"/>
</dbReference>
<dbReference type="InterPro" id="IPR001429">
    <property type="entry name" value="P2X_purnocptor"/>
</dbReference>
<dbReference type="InterPro" id="IPR053792">
    <property type="entry name" value="P2X_RECEPTOR_CS"/>
</dbReference>
<dbReference type="NCBIfam" id="TIGR00863">
    <property type="entry name" value="P2X"/>
    <property type="match status" value="1"/>
</dbReference>
<dbReference type="PANTHER" id="PTHR10125">
    <property type="entry name" value="P2X PURINOCEPTOR"/>
    <property type="match status" value="1"/>
</dbReference>
<dbReference type="PANTHER" id="PTHR10125:SF4">
    <property type="entry name" value="P2X PURINOCEPTOR 2"/>
    <property type="match status" value="1"/>
</dbReference>
<dbReference type="Pfam" id="PF00864">
    <property type="entry name" value="P2X_receptor"/>
    <property type="match status" value="1"/>
</dbReference>
<dbReference type="PRINTS" id="PR01309">
    <property type="entry name" value="P2X2RECEPTOR"/>
</dbReference>
<dbReference type="PRINTS" id="PR01307">
    <property type="entry name" value="P2XRECEPTOR"/>
</dbReference>
<dbReference type="PROSITE" id="PS01212">
    <property type="entry name" value="P2X_RECEPTOR"/>
    <property type="match status" value="1"/>
</dbReference>
<comment type="function">
    <text evidence="3 4">ATP-gated nonselective transmembrane cation channel permeable to potassium, sodium and calcium (By similarity). Activation by extracellular ATP induces a variety of cellular responses, such as excitatory postsynaptic responses in sensory neurons, neuromuscular junctions (NMJ) formation, hearing, perception of taste and peristalsis. In the inner ear, regulates sound transduction and auditory neurotransmission, outer hair cell electromotility, inner ear gap junctions, and K(+) recycling. Mediates synaptic transmission between neurons and from neurons to smooth muscle (By similarity).</text>
</comment>
<comment type="catalytic activity">
    <reaction evidence="4">
        <text>Ca(2+)(in) = Ca(2+)(out)</text>
        <dbReference type="Rhea" id="RHEA:29671"/>
        <dbReference type="ChEBI" id="CHEBI:29108"/>
    </reaction>
</comment>
<comment type="catalytic activity">
    <reaction evidence="1">
        <text>K(+)(in) = K(+)(out)</text>
        <dbReference type="Rhea" id="RHEA:29463"/>
        <dbReference type="ChEBI" id="CHEBI:29103"/>
    </reaction>
</comment>
<comment type="catalytic activity">
    <reaction evidence="1">
        <text>Na(+)(in) = Na(+)(out)</text>
        <dbReference type="Rhea" id="RHEA:34963"/>
        <dbReference type="ChEBI" id="CHEBI:29101"/>
    </reaction>
</comment>
<comment type="activity regulation">
    <text evidence="1 4">Fast activation by external ATP (By similarity). Exhibits slow desensitization during prolonged ATP activation (By similarity). Not sensitive to the ATP agonist:alpha/beta-methylene-ATP (By similarity).</text>
</comment>
<comment type="subunit">
    <text evidence="1 4">Homotrimer and heterotrimer; functional P2XRs are organized as homomeric and heteromeric trimers. Homotrimer. Forms heterodimer with P2RX1. Forms heterotrimer with P2RX6 (By similarity). Forms heterotrimer with P2RX3 (By similarity).</text>
</comment>
<comment type="subcellular location">
    <subcellularLocation>
        <location evidence="4">Cell membrane</location>
        <topology evidence="2">Multi-pass membrane protein</topology>
    </subcellularLocation>
</comment>
<comment type="alternative products">
    <event type="alternative splicing"/>
    <isoform>
        <id>O70397-1</id>
        <name evidence="8">P2X2-1</name>
        <sequence type="displayed"/>
    </isoform>
    <isoform>
        <id>O70397-2</id>
        <name evidence="8">P2X2-2</name>
        <sequence type="described" ref="VSP_004494"/>
    </isoform>
    <isoform>
        <id>O70397-3</id>
        <name evidence="8">P2X2-3</name>
        <sequence type="described" ref="VSP_014134"/>
    </isoform>
    <text>Additional isoforms seem to exist.</text>
</comment>
<comment type="tissue specificity">
    <text evidence="7">Express in organ of Corti.</text>
</comment>
<comment type="similarity">
    <text evidence="9">Belongs to the P2X receptor family.</text>
</comment>
<keyword id="KW-0025">Alternative splicing</keyword>
<keyword id="KW-0067">ATP-binding</keyword>
<keyword id="KW-1003">Cell membrane</keyword>
<keyword id="KW-1015">Disulfide bond</keyword>
<keyword id="KW-0325">Glycoprotein</keyword>
<keyword id="KW-0407">Ion channel</keyword>
<keyword id="KW-0406">Ion transport</keyword>
<keyword id="KW-1071">Ligand-gated ion channel</keyword>
<keyword id="KW-0472">Membrane</keyword>
<keyword id="KW-0547">Nucleotide-binding</keyword>
<keyword id="KW-0675">Receptor</keyword>
<keyword id="KW-1185">Reference proteome</keyword>
<keyword id="KW-0812">Transmembrane</keyword>
<keyword id="KW-1133">Transmembrane helix</keyword>
<keyword id="KW-0813">Transport</keyword>
<feature type="chain" id="PRO_0000161548" description="P2X purinoceptor 2">
    <location>
        <begin position="1"/>
        <end position="474"/>
    </location>
</feature>
<feature type="topological domain" description="Cytoplasmic" evidence="2">
    <location>
        <begin position="1"/>
        <end position="42"/>
    </location>
</feature>
<feature type="transmembrane region" description="Helical; Name=1" evidence="2">
    <location>
        <begin position="43"/>
        <end position="60"/>
    </location>
</feature>
<feature type="topological domain" description="Extracellular" evidence="2">
    <location>
        <begin position="61"/>
        <end position="333"/>
    </location>
</feature>
<feature type="transmembrane region" description="Helical; Name=2" evidence="2">
    <location>
        <begin position="334"/>
        <end position="354"/>
    </location>
</feature>
<feature type="topological domain" description="Cytoplasmic" evidence="2">
    <location>
        <begin position="355"/>
        <end position="474"/>
    </location>
</feature>
<feature type="region of interest" description="Pore-forming motif" evidence="2">
    <location>
        <begin position="316"/>
        <end position="329"/>
    </location>
</feature>
<feature type="region of interest" description="Disordered" evidence="6">
    <location>
        <begin position="445"/>
        <end position="474"/>
    </location>
</feature>
<feature type="compositionally biased region" description="Polar residues" evidence="6">
    <location>
        <begin position="453"/>
        <end position="466"/>
    </location>
</feature>
<feature type="binding site" evidence="2">
    <location>
        <position position="77"/>
    </location>
    <ligand>
        <name>ATP</name>
        <dbReference type="ChEBI" id="CHEBI:30616"/>
    </ligand>
</feature>
<feature type="binding site" evidence="2">
    <location>
        <position position="79"/>
    </location>
    <ligand>
        <name>ATP</name>
        <dbReference type="ChEBI" id="CHEBI:30616"/>
    </ligand>
</feature>
<feature type="binding site" evidence="2">
    <location>
        <position position="192"/>
    </location>
    <ligand>
        <name>ATP</name>
        <dbReference type="ChEBI" id="CHEBI:30616"/>
    </ligand>
</feature>
<feature type="binding site" evidence="2">
    <location>
        <position position="292"/>
    </location>
    <ligand>
        <name>ATP</name>
        <dbReference type="ChEBI" id="CHEBI:30616"/>
    </ligand>
</feature>
<feature type="binding site" evidence="2">
    <location>
        <position position="296"/>
    </location>
    <ligand>
        <name>ATP</name>
        <dbReference type="ChEBI" id="CHEBI:30616"/>
    </ligand>
</feature>
<feature type="binding site" evidence="2">
    <location>
        <position position="298"/>
    </location>
    <ligand>
        <name>ATP</name>
        <dbReference type="ChEBI" id="CHEBI:30616"/>
    </ligand>
</feature>
<feature type="binding site" evidence="2">
    <location>
        <position position="315"/>
    </location>
    <ligand>
        <name>ATP</name>
        <dbReference type="ChEBI" id="CHEBI:30616"/>
    </ligand>
</feature>
<feature type="glycosylation site" description="N-linked (GlcNAc...) asparagine" evidence="5">
    <location>
        <position position="129"/>
    </location>
</feature>
<feature type="glycosylation site" description="N-linked (GlcNAc...) asparagine" evidence="5">
    <location>
        <position position="190"/>
    </location>
</feature>
<feature type="glycosylation site" description="N-linked (GlcNAc...) asparagine" evidence="5">
    <location>
        <position position="247"/>
    </location>
</feature>
<feature type="glycosylation site" description="N-linked (GlcNAc...) asparagine" evidence="5">
    <location>
        <position position="306"/>
    </location>
</feature>
<feature type="disulfide bond" evidence="2">
    <location>
        <begin position="121"/>
        <end position="172"/>
    </location>
</feature>
<feature type="disulfide bond" evidence="2">
    <location>
        <begin position="132"/>
        <end position="155"/>
    </location>
</feature>
<feature type="disulfide bond" evidence="2">
    <location>
        <begin position="138"/>
        <end position="166"/>
    </location>
</feature>
<feature type="disulfide bond" evidence="2">
    <location>
        <begin position="222"/>
        <end position="232"/>
    </location>
</feature>
<feature type="disulfide bond" evidence="2">
    <location>
        <begin position="266"/>
        <end position="275"/>
    </location>
</feature>
<feature type="splice variant" id="VSP_014134" description="In isoform P2X2-3." evidence="8">
    <original>R</original>
    <variation>RYLPRVPSRGKMGQWALHSAGQRSLHPR</variation>
    <location>
        <position position="298"/>
    </location>
</feature>
<feature type="splice variant" id="VSP_004494" description="In isoform P2X2-2." evidence="8">
    <original>VCAPSRPSSSWPVTLALILGQAPPPPRHCSSPWHLAHQAVGPQGAEQAKLLGLQNPTPYRLSEQI</original>
    <variation>I</variation>
    <location>
        <begin position="377"/>
        <end position="441"/>
    </location>
</feature>
<protein>
    <recommendedName>
        <fullName>P2X purinoceptor 2</fullName>
        <shortName>P2X2</shortName>
    </recommendedName>
    <alternativeName>
        <fullName>ATP receptor</fullName>
    </alternativeName>
    <alternativeName>
        <fullName>Purinergic receptor</fullName>
    </alternativeName>
</protein>